<proteinExistence type="evidence at protein level"/>
<feature type="chain" id="PRO_0000338347" description="Replicase polyprotein 1a">
    <location>
        <begin position="1"/>
        <end position="4117"/>
    </location>
</feature>
<feature type="chain" id="PRO_0000338348" description="Non-structural protein 1" evidence="1">
    <location>
        <begin position="1"/>
        <end position="110"/>
    </location>
</feature>
<feature type="chain" id="PRO_0000338349" description="Non-structural protein 2" evidence="1">
    <location>
        <begin position="111"/>
        <end position="895"/>
    </location>
</feature>
<feature type="chain" id="PRO_0000338350" description="Papain-like protease nsp3" evidence="1">
    <location>
        <begin position="896"/>
        <end position="2516"/>
    </location>
</feature>
<feature type="chain" id="PRO_0000338351" description="Non-structural protein 4" evidence="1">
    <location>
        <begin position="2517"/>
        <end position="2997"/>
    </location>
</feature>
<feature type="chain" id="PRO_0000338352" description="3C-like proteinase nsp5" evidence="1">
    <location>
        <begin position="2998"/>
        <end position="3299"/>
    </location>
</feature>
<feature type="chain" id="PRO_0000338353" description="Non-structural protein 6" evidence="1">
    <location>
        <begin position="3300"/>
        <end position="3579"/>
    </location>
</feature>
<feature type="chain" id="PRO_0000338354" description="Non-structural protein 7" evidence="1">
    <location>
        <begin position="3580"/>
        <end position="3662"/>
    </location>
</feature>
<feature type="chain" id="PRO_0000338355" description="Non-structural protein 8" evidence="1">
    <location>
        <begin position="3663"/>
        <end position="3857"/>
    </location>
</feature>
<feature type="chain" id="PRO_0000338356" description="RNA-capping enzyme subunit nsp9" evidence="1">
    <location>
        <begin position="3858"/>
        <end position="3965"/>
    </location>
</feature>
<feature type="chain" id="PRO_0000338357" description="Non-structural protein 10" evidence="1">
    <location>
        <begin position="3966"/>
        <end position="4100"/>
    </location>
</feature>
<feature type="chain" id="PRO_0000338358" description="Non-structural protein 11" evidence="1">
    <location>
        <begin position="4111"/>
        <end position="4117"/>
    </location>
</feature>
<feature type="transmembrane region" description="Helical" evidence="7">
    <location>
        <begin position="1959"/>
        <end position="1979"/>
    </location>
</feature>
<feature type="transmembrane region" description="Helical" evidence="7">
    <location>
        <begin position="2022"/>
        <end position="2042"/>
    </location>
</feature>
<feature type="transmembrane region" description="Helical" evidence="7">
    <location>
        <begin position="2105"/>
        <end position="2125"/>
    </location>
</feature>
<feature type="transmembrane region" description="Helical" evidence="7">
    <location>
        <begin position="2127"/>
        <end position="2147"/>
    </location>
</feature>
<feature type="transmembrane region" description="Helical" evidence="7">
    <location>
        <begin position="2150"/>
        <end position="2170"/>
    </location>
</feature>
<feature type="transmembrane region" description="Helical" evidence="7">
    <location>
        <begin position="2528"/>
        <end position="2548"/>
    </location>
</feature>
<feature type="transmembrane region" description="Helical" evidence="7">
    <location>
        <begin position="2619"/>
        <end position="2639"/>
    </location>
</feature>
<feature type="transmembrane region" description="Helical" evidence="7">
    <location>
        <begin position="2654"/>
        <end position="2674"/>
    </location>
</feature>
<feature type="transmembrane region" description="Helical" evidence="7">
    <location>
        <begin position="2754"/>
        <end position="2774"/>
    </location>
</feature>
<feature type="transmembrane region" description="Helical" evidence="7">
    <location>
        <begin position="2787"/>
        <end position="2807"/>
    </location>
</feature>
<feature type="transmembrane region" description="Helical" evidence="7">
    <location>
        <begin position="2814"/>
        <end position="2834"/>
    </location>
</feature>
<feature type="transmembrane region" description="Helical" evidence="7">
    <location>
        <begin position="2863"/>
        <end position="2883"/>
    </location>
</feature>
<feature type="transmembrane region" description="Helical" evidence="7">
    <location>
        <begin position="3336"/>
        <end position="3356"/>
    </location>
</feature>
<feature type="transmembrane region" description="Helical" evidence="7">
    <location>
        <begin position="3361"/>
        <end position="3381"/>
    </location>
</feature>
<feature type="transmembrane region" description="Helical" evidence="7">
    <location>
        <begin position="3399"/>
        <end position="3419"/>
    </location>
</feature>
<feature type="transmembrane region" description="Helical" evidence="7">
    <location>
        <begin position="3431"/>
        <end position="3451"/>
    </location>
</feature>
<feature type="transmembrane region" description="Helical" evidence="7">
    <location>
        <begin position="3454"/>
        <end position="3474"/>
    </location>
</feature>
<feature type="transmembrane region" description="Helical" evidence="7">
    <location>
        <begin position="3476"/>
        <end position="3496"/>
    </location>
</feature>
<feature type="transmembrane region" description="Helical" evidence="7">
    <location>
        <begin position="3500"/>
        <end position="3520"/>
    </location>
</feature>
<feature type="domain" description="CoV Nsp1 globular" evidence="17">
    <location>
        <begin position="2"/>
        <end position="109"/>
    </location>
</feature>
<feature type="domain" description="CoV Nsp2 N-terminal" evidence="18">
    <location>
        <begin position="112"/>
        <end position="364"/>
    </location>
</feature>
<feature type="domain" description="CoV Nsp2 middle" evidence="19">
    <location>
        <begin position="383"/>
        <end position="776"/>
    </location>
</feature>
<feature type="domain" description="CoV Nsp2 C-terminal" evidence="20">
    <location>
        <begin position="778"/>
        <end position="895"/>
    </location>
</feature>
<feature type="domain" description="Ubiquitin-like 1" evidence="8">
    <location>
        <begin position="896"/>
        <end position="991"/>
    </location>
</feature>
<feature type="domain" description="Peptidase C16 1" evidence="9">
    <location>
        <begin position="1057"/>
        <end position="1296"/>
    </location>
</feature>
<feature type="domain" description="Macro" evidence="10">
    <location>
        <begin position="1297"/>
        <end position="1465"/>
    </location>
</feature>
<feature type="domain" description="Ubiquitin-like 2" evidence="8">
    <location>
        <begin position="1630"/>
        <end position="1685"/>
    </location>
</feature>
<feature type="domain" description="Peptidase C16 2" evidence="9">
    <location>
        <begin position="1691"/>
        <end position="1951"/>
    </location>
</feature>
<feature type="domain" description="3Ecto" evidence="22">
    <location>
        <begin position="2038"/>
        <end position="2102"/>
    </location>
</feature>
<feature type="domain" description="CoV Nsp3 Y" evidence="21">
    <location>
        <begin position="2176"/>
        <end position="2516"/>
    </location>
</feature>
<feature type="domain" description="Nsp4C" evidence="12">
    <location>
        <begin position="2902"/>
        <end position="2997"/>
    </location>
</feature>
<feature type="domain" description="Peptidase C30" evidence="11">
    <location>
        <begin position="2998"/>
        <end position="3299"/>
    </location>
</feature>
<feature type="domain" description="RdRp Nsp7 cofactor" evidence="13">
    <location>
        <begin position="3580"/>
        <end position="3662"/>
    </location>
</feature>
<feature type="domain" description="RdRp Nsp8 cofactor" evidence="14">
    <location>
        <begin position="3663"/>
        <end position="3857"/>
    </location>
</feature>
<feature type="domain" description="Nsp9 ssRNA-binding" evidence="15">
    <location>
        <begin position="3858"/>
        <end position="3965"/>
    </location>
</feature>
<feature type="domain" description="ExoN/MTase coactivator" evidence="16">
    <location>
        <begin position="3966"/>
        <end position="4103"/>
    </location>
</feature>
<feature type="zinc finger region" description="C4-type 1; degenerate" evidence="9">
    <location>
        <begin position="1162"/>
        <end position="1193"/>
    </location>
</feature>
<feature type="zinc finger region" description="C4-type 2; degenerate" evidence="9">
    <location>
        <begin position="1808"/>
        <end position="1838"/>
    </location>
</feature>
<feature type="zinc finger region" evidence="1">
    <location>
        <begin position="4039"/>
        <end position="4055"/>
    </location>
</feature>
<feature type="zinc finger region" evidence="1">
    <location>
        <begin position="4081"/>
        <end position="4094"/>
    </location>
</feature>
<feature type="region of interest" description="Disordered" evidence="23">
    <location>
        <begin position="1009"/>
        <end position="1040"/>
    </location>
</feature>
<feature type="region of interest" description="HD1">
    <location>
        <begin position="1959"/>
        <end position="2170"/>
    </location>
</feature>
<feature type="region of interest" description="Y1" evidence="21">
    <location>
        <begin position="2176"/>
        <end position="2266"/>
    </location>
</feature>
<feature type="region of interest" description="ZF1" evidence="21">
    <location>
        <begin position="2180"/>
        <end position="2193"/>
    </location>
</feature>
<feature type="region of interest" description="ZF2" evidence="21">
    <location>
        <begin position="2226"/>
        <end position="2236"/>
    </location>
</feature>
<feature type="region of interest" description="CoV-Y" evidence="21">
    <location>
        <begin position="2267"/>
        <end position="2516"/>
    </location>
</feature>
<feature type="region of interest" description="Y2" evidence="21">
    <location>
        <begin position="2267"/>
        <end position="2356"/>
    </location>
</feature>
<feature type="region of interest" description="Y3" evidence="21">
    <location>
        <begin position="2357"/>
        <end position="2414"/>
    </location>
</feature>
<feature type="region of interest" description="Y4" evidence="21">
    <location>
        <begin position="2415"/>
        <end position="2516"/>
    </location>
</feature>
<feature type="region of interest" description="HD2">
    <location>
        <begin position="2528"/>
        <end position="2883"/>
    </location>
</feature>
<feature type="region of interest" description="HD3">
    <location>
        <begin position="3336"/>
        <end position="3520"/>
    </location>
</feature>
<feature type="active site" description="For PL1-PRO activity" evidence="9">
    <location>
        <position position="1091"/>
    </location>
</feature>
<feature type="active site" description="For PL1-PRO activity" evidence="9">
    <location>
        <position position="1239"/>
    </location>
</feature>
<feature type="active site" description="For PL1-PRO activity" evidence="9">
    <location>
        <position position="1252"/>
    </location>
</feature>
<feature type="active site" description="For PL2-PRO activity" evidence="9">
    <location>
        <position position="1729"/>
    </location>
</feature>
<feature type="active site" description="For PL2-PRO activity" evidence="9">
    <location>
        <position position="1888"/>
    </location>
</feature>
<feature type="active site" description="For PL2-PRO activity" evidence="9">
    <location>
        <position position="1901"/>
    </location>
</feature>
<feature type="active site" description="For 3CL-PRO activity" evidence="11 25">
    <location>
        <position position="3038"/>
    </location>
</feature>
<feature type="active site" description="For 3CL-PRO activity" evidence="11 25">
    <location>
        <position position="3141"/>
    </location>
</feature>
<feature type="binding site" evidence="21">
    <location>
        <position position="2180"/>
    </location>
    <ligand>
        <name>Zn(2+)</name>
        <dbReference type="ChEBI" id="CHEBI:29105"/>
        <label>1</label>
    </ligand>
</feature>
<feature type="binding site" evidence="21">
    <location>
        <position position="2185"/>
    </location>
    <ligand>
        <name>Zn(2+)</name>
        <dbReference type="ChEBI" id="CHEBI:29105"/>
        <label>1</label>
    </ligand>
</feature>
<feature type="binding site" evidence="21">
    <location>
        <position position="2190"/>
    </location>
    <ligand>
        <name>Zn(2+)</name>
        <dbReference type="ChEBI" id="CHEBI:29105"/>
        <label>1</label>
    </ligand>
</feature>
<feature type="binding site" evidence="21">
    <location>
        <position position="2193"/>
    </location>
    <ligand>
        <name>Zn(2+)</name>
        <dbReference type="ChEBI" id="CHEBI:29105"/>
        <label>1</label>
    </ligand>
</feature>
<feature type="binding site" evidence="21">
    <location>
        <position position="2226"/>
    </location>
    <ligand>
        <name>Zn(2+)</name>
        <dbReference type="ChEBI" id="CHEBI:29105"/>
        <label>2</label>
    </ligand>
</feature>
<feature type="binding site" evidence="21">
    <location>
        <position position="2229"/>
    </location>
    <ligand>
        <name>Zn(2+)</name>
        <dbReference type="ChEBI" id="CHEBI:29105"/>
        <label>2</label>
    </ligand>
</feature>
<feature type="binding site" evidence="21">
    <location>
        <position position="2233"/>
    </location>
    <ligand>
        <name>Zn(2+)</name>
        <dbReference type="ChEBI" id="CHEBI:29105"/>
        <label>2</label>
    </ligand>
</feature>
<feature type="binding site" evidence="21">
    <location>
        <position position="2236"/>
    </location>
    <ligand>
        <name>Zn(2+)</name>
        <dbReference type="ChEBI" id="CHEBI:29105"/>
        <label>2</label>
    </ligand>
</feature>
<feature type="binding site" evidence="16">
    <location>
        <position position="4039"/>
    </location>
    <ligand>
        <name>Zn(2+)</name>
        <dbReference type="ChEBI" id="CHEBI:29105"/>
        <label>3</label>
    </ligand>
</feature>
<feature type="binding site" evidence="16">
    <location>
        <position position="4042"/>
    </location>
    <ligand>
        <name>Zn(2+)</name>
        <dbReference type="ChEBI" id="CHEBI:29105"/>
        <label>3</label>
    </ligand>
</feature>
<feature type="binding site" evidence="16">
    <location>
        <position position="4048"/>
    </location>
    <ligand>
        <name>Zn(2+)</name>
        <dbReference type="ChEBI" id="CHEBI:29105"/>
        <label>3</label>
    </ligand>
</feature>
<feature type="binding site" evidence="16">
    <location>
        <position position="4055"/>
    </location>
    <ligand>
        <name>Zn(2+)</name>
        <dbReference type="ChEBI" id="CHEBI:29105"/>
        <label>3</label>
    </ligand>
</feature>
<feature type="binding site" evidence="16">
    <location>
        <position position="4081"/>
    </location>
    <ligand>
        <name>Zn(2+)</name>
        <dbReference type="ChEBI" id="CHEBI:29105"/>
        <label>4</label>
    </ligand>
</feature>
<feature type="binding site" evidence="16">
    <location>
        <position position="4084"/>
    </location>
    <ligand>
        <name>Zn(2+)</name>
        <dbReference type="ChEBI" id="CHEBI:29105"/>
        <label>4</label>
    </ligand>
</feature>
<feature type="binding site" evidence="16">
    <location>
        <position position="4092"/>
    </location>
    <ligand>
        <name>Zn(2+)</name>
        <dbReference type="ChEBI" id="CHEBI:29105"/>
        <label>4</label>
    </ligand>
</feature>
<feature type="binding site" evidence="16">
    <location>
        <position position="4094"/>
    </location>
    <ligand>
        <name>Zn(2+)</name>
        <dbReference type="ChEBI" id="CHEBI:29105"/>
        <label>4</label>
    </ligand>
</feature>
<feature type="site" description="Cleavage; by PL1-PRO" evidence="1">
    <location>
        <begin position="110"/>
        <end position="111"/>
    </location>
</feature>
<feature type="site" description="Cleavage; by PL1-PRO" evidence="1">
    <location>
        <begin position="895"/>
        <end position="896"/>
    </location>
</feature>
<feature type="site" description="Cleavage; by PL2-PRO" evidence="1">
    <location>
        <begin position="2516"/>
        <end position="2517"/>
    </location>
</feature>
<feature type="site" description="Cleavage; by 3CL-PRO" evidence="1">
    <location>
        <begin position="2997"/>
        <end position="2998"/>
    </location>
</feature>
<feature type="site" description="Cleavage; by 3CL-PRO" evidence="1">
    <location>
        <begin position="3299"/>
        <end position="3300"/>
    </location>
</feature>
<feature type="site" description="Cleavage; by 3CL-PRO" evidence="1">
    <location>
        <begin position="3579"/>
        <end position="3580"/>
    </location>
</feature>
<feature type="site" description="Cleavage; by 3CL-PRO" evidence="1">
    <location>
        <begin position="3662"/>
        <end position="3663"/>
    </location>
</feature>
<feature type="site" description="Cleavage; by 3CL-PRO" evidence="1">
    <location>
        <begin position="3857"/>
        <end position="3858"/>
    </location>
</feature>
<feature type="site" description="Cleavage; by 3CL-PRO" evidence="1">
    <location>
        <begin position="3965"/>
        <end position="3966"/>
    </location>
</feature>
<feature type="site" description="Cleavage; by 3CL-PRO" evidence="1">
    <location>
        <begin position="4100"/>
        <end position="4101"/>
    </location>
</feature>
<feature type="disulfide bond" evidence="22">
    <location>
        <begin position="2054"/>
        <end position="2080"/>
    </location>
</feature>
<feature type="disulfide bond" evidence="22">
    <location>
        <begin position="2072"/>
        <end position="2077"/>
    </location>
</feature>
<feature type="disulfide bond" description="Interchain" evidence="4">
    <location>
        <position position="3916"/>
    </location>
</feature>
<feature type="helix" evidence="32">
    <location>
        <begin position="3008"/>
        <end position="3011"/>
    </location>
</feature>
<feature type="strand" evidence="32">
    <location>
        <begin position="3014"/>
        <end position="3019"/>
    </location>
</feature>
<feature type="strand" evidence="32">
    <location>
        <begin position="3022"/>
        <end position="3029"/>
    </location>
</feature>
<feature type="strand" evidence="32">
    <location>
        <begin position="3032"/>
        <end position="3036"/>
    </location>
</feature>
<feature type="helix" evidence="32">
    <location>
        <begin position="3037"/>
        <end position="3040"/>
    </location>
</feature>
<feature type="strand" evidence="32">
    <location>
        <begin position="3044"/>
        <end position="3046"/>
    </location>
</feature>
<feature type="helix" evidence="32">
    <location>
        <begin position="3050"/>
        <end position="3056"/>
    </location>
</feature>
<feature type="helix" evidence="32">
    <location>
        <begin position="3059"/>
        <end position="3061"/>
    </location>
</feature>
<feature type="strand" evidence="32">
    <location>
        <begin position="3062"/>
        <end position="3066"/>
    </location>
</feature>
<feature type="strand" evidence="32">
    <location>
        <begin position="3069"/>
        <end position="3071"/>
    </location>
</feature>
<feature type="strand" evidence="32">
    <location>
        <begin position="3073"/>
        <end position="3079"/>
    </location>
</feature>
<feature type="strand" evidence="32">
    <location>
        <begin position="3082"/>
        <end position="3089"/>
    </location>
</feature>
<feature type="strand" evidence="32">
    <location>
        <begin position="3096"/>
        <end position="3099"/>
    </location>
</feature>
<feature type="strand" evidence="32">
    <location>
        <begin position="3107"/>
        <end position="3114"/>
    </location>
</feature>
<feature type="strand" evidence="32">
    <location>
        <begin position="3117"/>
        <end position="3125"/>
    </location>
</feature>
<feature type="strand" evidence="32">
    <location>
        <begin position="3144"/>
        <end position="3149"/>
    </location>
</feature>
<feature type="strand" evidence="32">
    <location>
        <begin position="3152"/>
        <end position="3162"/>
    </location>
</feature>
<feature type="strand" evidence="32">
    <location>
        <begin position="3168"/>
        <end position="3171"/>
    </location>
</feature>
<feature type="helix" evidence="32">
    <location>
        <begin position="3178"/>
        <end position="3180"/>
    </location>
</feature>
<feature type="strand" evidence="32">
    <location>
        <begin position="3183"/>
        <end position="3186"/>
    </location>
</feature>
<feature type="helix" evidence="32">
    <location>
        <begin position="3197"/>
        <end position="3209"/>
    </location>
</feature>
<feature type="helix" evidence="32">
    <location>
        <begin position="3223"/>
        <end position="3230"/>
    </location>
</feature>
<feature type="turn" evidence="32">
    <location>
        <begin position="3231"/>
        <end position="3234"/>
    </location>
</feature>
<feature type="helix" evidence="32">
    <location>
        <begin position="3242"/>
        <end position="3244"/>
    </location>
</feature>
<feature type="helix" evidence="32">
    <location>
        <begin position="3245"/>
        <end position="3251"/>
    </location>
</feature>
<feature type="helix" evidence="32">
    <location>
        <begin position="3255"/>
        <end position="3265"/>
    </location>
</feature>
<feature type="strand" evidence="32">
    <location>
        <begin position="3277"/>
        <end position="3279"/>
    </location>
</feature>
<feature type="helix" evidence="32">
    <location>
        <begin position="3286"/>
        <end position="3294"/>
    </location>
</feature>
<protein>
    <recommendedName>
        <fullName>Replicase polyprotein 1a</fullName>
        <shortName>pp1a</shortName>
    </recommendedName>
    <alternativeName>
        <fullName>ORF1a polyprotein</fullName>
    </alternativeName>
    <component>
        <recommendedName>
            <fullName>Non-structural protein 1</fullName>
            <shortName>nsp1</shortName>
        </recommendedName>
        <alternativeName>
            <fullName>p9</fullName>
        </alternativeName>
    </component>
    <component>
        <recommendedName>
            <fullName>Non-structural protein 2</fullName>
            <shortName>nsp2</shortName>
        </recommendedName>
        <alternativeName>
            <fullName>p87</fullName>
        </alternativeName>
    </component>
    <component>
        <recommendedName>
            <fullName evidence="6">Papain-like protease nsp3</fullName>
            <ecNumber evidence="6">3.4.19.12</ecNumber>
            <ecNumber>3.4.22.-</ecNumber>
        </recommendedName>
        <alternativeName>
            <fullName>Non-structural protein 3</fullName>
            <shortName>nsp3</shortName>
        </alternativeName>
        <alternativeName>
            <fullName>PL1-PRO/PL2-PRO</fullName>
        </alternativeName>
        <alternativeName>
            <fullName>PLP1/PLP2</fullName>
        </alternativeName>
        <alternativeName>
            <fullName>Papain-like proteinase</fullName>
            <shortName>PL-PRO</shortName>
        </alternativeName>
        <alternativeName>
            <fullName>p195</fullName>
        </alternativeName>
    </component>
    <component>
        <recommendedName>
            <fullName>Non-structural protein 4</fullName>
            <shortName>nsp4</shortName>
        </recommendedName>
        <alternativeName>
            <fullName>Peptide HD2</fullName>
        </alternativeName>
    </component>
    <component>
        <recommendedName>
            <fullName>3C-like proteinase nsp5</fullName>
            <shortName>3CL-PRO</shortName>
            <shortName>3CLp</shortName>
            <ecNumber evidence="25 26">3.4.22.-</ecNumber>
        </recommendedName>
        <alternativeName>
            <fullName>M-PRO</fullName>
        </alternativeName>
        <alternativeName>
            <fullName>nsp5</fullName>
        </alternativeName>
        <alternativeName>
            <fullName>p34</fullName>
        </alternativeName>
    </component>
    <component>
        <recommendedName>
            <fullName>Non-structural protein 6</fullName>
            <shortName>nsp6</shortName>
        </recommendedName>
    </component>
    <component>
        <recommendedName>
            <fullName>Non-structural protein 7</fullName>
            <shortName>nsp7</shortName>
        </recommendedName>
        <alternativeName>
            <fullName>p5</fullName>
        </alternativeName>
    </component>
    <component>
        <recommendedName>
            <fullName>Non-structural protein 8</fullName>
            <shortName>nsp8</shortName>
        </recommendedName>
        <alternativeName>
            <fullName>p23</fullName>
        </alternativeName>
    </component>
    <component>
        <recommendedName>
            <fullName>RNA-capping enzyme subunit nsp9</fullName>
        </recommendedName>
        <alternativeName>
            <fullName>Non-structural protein 9</fullName>
            <shortName>nsp9</shortName>
            <ecNumber evidence="6">2.7.7.50</ecNumber>
        </alternativeName>
        <alternativeName>
            <fullName>p12</fullName>
        </alternativeName>
    </component>
    <component>
        <recommendedName>
            <fullName>Non-structural protein 10</fullName>
            <shortName>nsp10</shortName>
        </recommendedName>
        <alternativeName>
            <fullName>Growth factor-like peptide</fullName>
            <shortName>GFL</shortName>
        </alternativeName>
        <alternativeName>
            <fullName>p14</fullName>
        </alternativeName>
    </component>
    <component>
        <recommendedName>
            <fullName>Non-structural protein 11</fullName>
            <shortName>nsp11</shortName>
        </recommendedName>
    </component>
</protein>
<name>R1A_PEDV7</name>
<gene>
    <name type="ORF">1a</name>
</gene>
<reference key="1">
    <citation type="journal article" date="1998" name="Adv. Exp. Med. Biol.">
        <title>Further analysis of the genome of porcine epidemic diarrhea virus.</title>
        <authorList>
            <person name="Bridgen A."/>
            <person name="Kocherhans R."/>
            <person name="Tobler K."/>
            <person name="Carvajal A."/>
            <person name="Ackermann M."/>
        </authorList>
    </citation>
    <scope>NUCLEOTIDE SEQUENCE [GENOMIC RNA]</scope>
</reference>
<reference key="2">
    <citation type="journal article" date="2001" name="Virus Genes">
        <title>Completion of the porcine epidemic diarrhoea coronavirus (PEDV) genome sequence.</title>
        <authorList>
            <person name="Kocherhans R."/>
            <person name="Bridgen A."/>
            <person name="Ackermann M."/>
            <person name="Tobler K."/>
        </authorList>
    </citation>
    <scope>NUCLEOTIDE SEQUENCE [GENOMIC RNA]</scope>
</reference>
<reference key="3">
    <citation type="journal article" date="2016" name="Virology">
        <title>Suppression of type I interferon production by porcine epidemic diarrhea virus and degradation of CREB-binding protein by nsp1.</title>
        <authorList>
            <person name="Zhang Q."/>
            <person name="Shi K."/>
            <person name="Yoo D."/>
        </authorList>
    </citation>
    <scope>FUNCTION (NON-STRUCTURAL PROTEIN 1)</scope>
    <scope>SUBCELLULAR LOCATION (NON-STRUCTURAL PROTEIN 1)</scope>
    <source>
        <strain>USA/Colorado/2013</strain>
    </source>
</reference>
<reference key="4">
    <citation type="journal article" date="2016" name="Sci. Rep.">
        <title>X-Ray Structure and Inhibition of 3C-like Protease from Porcine Epidemic Diarrhea Virus.</title>
        <authorList>
            <person name="St John S.E."/>
            <person name="Anson B.J."/>
            <person name="Mesecar A.D."/>
        </authorList>
    </citation>
    <scope>ACTIVITY REGULATION (3C-LIKE PROTEINASE NSP5)</scope>
    <scope>SUBUNIT (3C-LIKE PROTEINASE NSP5)</scope>
    <scope>ACTIVE SITE (3C-LIKE PROTEINASE NSP5)</scope>
    <scope>CATALYTIC ACTIVITY (3C-LIKE PROTEINASE NSP5)</scope>
</reference>
<reference key="5">
    <citation type="journal article" date="2017" name="Virology">
        <title>Inhibition of NF-kappaB activity by the porcine epidemic diarrhea virus nonstructural protein 1 for innate immune evasion.</title>
        <authorList>
            <person name="Zhang Q."/>
            <person name="Ma J."/>
            <person name="Yoo D."/>
        </authorList>
    </citation>
    <scope>FUNCTION (NON-STRUCTURAL PROTEIN 1)</scope>
    <source>
        <strain>USA/Colorado/2013</strain>
    </source>
</reference>
<reference key="6">
    <citation type="journal article" date="2022" name="Front. Microbiol.">
        <title>Porcine Epidemic Diarrhea Virus Infection Subverts Arsenite-Induced Stress Granules Formation.</title>
        <authorList>
            <person name="Guo X."/>
            <person name="Yu K."/>
            <person name="Xin Z."/>
            <person name="Liu L."/>
            <person name="Gao Y."/>
            <person name="Hu F."/>
            <person name="Ma X."/>
            <person name="Yu K."/>
            <person name="Li Y."/>
            <person name="Huang B."/>
            <person name="Yan Z."/>
            <person name="Wu J."/>
        </authorList>
    </citation>
    <scope>FUNCTION (3C-LIKE PROTEINASE NSP5)</scope>
    <scope>FUNCTION (NON-STRUCTURAL PROTEIN 3)</scope>
    <source>
        <strain>SDSX16</strain>
    </source>
</reference>
<reference evidence="31" key="7">
    <citation type="journal article" date="2017" name="J. Med. Chem.">
        <title>Michael Acceptor-Based Peptidomimetic Inhibitor of Main Protease from Porcine Epidemic Diarrhea Virus.</title>
        <authorList>
            <person name="Wang F."/>
            <person name="Chen C."/>
            <person name="Yang K."/>
            <person name="Xu Y."/>
            <person name="Liu X."/>
            <person name="Gao F."/>
            <person name="Liu H."/>
            <person name="Chen X."/>
            <person name="Zhao Q."/>
            <person name="Liu X."/>
            <person name="Cai Y."/>
            <person name="Yang H."/>
        </authorList>
    </citation>
    <scope>X-RAY CRYSTALLOGRAPHY (2.44 ANGSTROMS) OF 2998-3299 IN COMPLEX WITH PEPTIDOMIMETIC INHIBITOR N3</scope>
    <scope>CATALYTIC ACTIVITY (3C-LIKE PROTEINASE NSP5)</scope>
    <scope>SUBUNIT (3C-LIKE PROTEINASE NSP5)</scope>
</reference>
<dbReference type="EC" id="3.4.19.12" evidence="6"/>
<dbReference type="EC" id="3.4.22.-" evidence="25 26"/>
<dbReference type="EC" id="2.7.7.50" evidence="6"/>
<dbReference type="EMBL" id="AF353511">
    <property type="status" value="NOT_ANNOTATED_CDS"/>
    <property type="molecule type" value="Genomic_RNA"/>
</dbReference>
<dbReference type="PDB" id="5GWZ">
    <property type="method" value="X-ray"/>
    <property type="resolution" value="2.44 A"/>
    <property type="chains" value="A/B=2998-3299"/>
</dbReference>
<dbReference type="PDBsum" id="5GWZ"/>
<dbReference type="SMR" id="P0C6V6"/>
<dbReference type="SABIO-RK" id="P0C6V6"/>
<dbReference type="Proteomes" id="UP000008159">
    <property type="component" value="Segment"/>
</dbReference>
<dbReference type="GO" id="GO:0044165">
    <property type="term" value="C:host cell endoplasmic reticulum"/>
    <property type="evidence" value="ECO:0007669"/>
    <property type="project" value="UniProtKB-SubCell"/>
</dbReference>
<dbReference type="GO" id="GO:0033644">
    <property type="term" value="C:host cell membrane"/>
    <property type="evidence" value="ECO:0007669"/>
    <property type="project" value="UniProtKB-SubCell"/>
</dbReference>
<dbReference type="GO" id="GO:0042025">
    <property type="term" value="C:host cell nucleus"/>
    <property type="evidence" value="ECO:0007669"/>
    <property type="project" value="UniProtKB-SubCell"/>
</dbReference>
<dbReference type="GO" id="GO:0044220">
    <property type="term" value="C:host cell perinuclear region of cytoplasm"/>
    <property type="evidence" value="ECO:0007669"/>
    <property type="project" value="UniProtKB-SubCell"/>
</dbReference>
<dbReference type="GO" id="GO:0016020">
    <property type="term" value="C:membrane"/>
    <property type="evidence" value="ECO:0007669"/>
    <property type="project" value="UniProtKB-KW"/>
</dbReference>
<dbReference type="GO" id="GO:0004843">
    <property type="term" value="F:cysteine-type deubiquitinase activity"/>
    <property type="evidence" value="ECO:0007669"/>
    <property type="project" value="UniProtKB-EC"/>
</dbReference>
<dbReference type="GO" id="GO:0004197">
    <property type="term" value="F:cysteine-type endopeptidase activity"/>
    <property type="evidence" value="ECO:0007669"/>
    <property type="project" value="InterPro"/>
</dbReference>
<dbReference type="GO" id="GO:0008242">
    <property type="term" value="F:omega peptidase activity"/>
    <property type="evidence" value="ECO:0007669"/>
    <property type="project" value="InterPro"/>
</dbReference>
<dbReference type="GO" id="GO:0003723">
    <property type="term" value="F:RNA binding"/>
    <property type="evidence" value="ECO:0007669"/>
    <property type="project" value="UniProtKB-KW"/>
</dbReference>
<dbReference type="GO" id="GO:0016740">
    <property type="term" value="F:transferase activity"/>
    <property type="evidence" value="ECO:0007669"/>
    <property type="project" value="UniProtKB-KW"/>
</dbReference>
<dbReference type="GO" id="GO:0008270">
    <property type="term" value="F:zinc ion binding"/>
    <property type="evidence" value="ECO:0007669"/>
    <property type="project" value="UniProtKB-KW"/>
</dbReference>
<dbReference type="GO" id="GO:0006508">
    <property type="term" value="P:proteolysis"/>
    <property type="evidence" value="ECO:0007669"/>
    <property type="project" value="UniProtKB-KW"/>
</dbReference>
<dbReference type="GO" id="GO:0010506">
    <property type="term" value="P:regulation of autophagy"/>
    <property type="evidence" value="ECO:0007669"/>
    <property type="project" value="InterPro"/>
</dbReference>
<dbReference type="GO" id="GO:0039520">
    <property type="term" value="P:symbiont-mediated activation of host autophagy"/>
    <property type="evidence" value="ECO:0007669"/>
    <property type="project" value="UniProtKB-KW"/>
</dbReference>
<dbReference type="GO" id="GO:0039648">
    <property type="term" value="P:symbiont-mediated perturbation of host ubiquitin-like protein modification"/>
    <property type="evidence" value="ECO:0007669"/>
    <property type="project" value="UniProtKB-KW"/>
</dbReference>
<dbReference type="GO" id="GO:0039548">
    <property type="term" value="P:symbiont-mediated suppression of host cytoplasmic pattern recognition receptor signaling pathway via inhibition of IRF3 activity"/>
    <property type="evidence" value="ECO:0007669"/>
    <property type="project" value="UniProtKB-KW"/>
</dbReference>
<dbReference type="GO" id="GO:0085034">
    <property type="term" value="P:symbiont-mediated suppression of host NF-kappaB cascade"/>
    <property type="evidence" value="ECO:0007669"/>
    <property type="project" value="UniProtKB-KW"/>
</dbReference>
<dbReference type="GO" id="GO:0019079">
    <property type="term" value="P:viral genome replication"/>
    <property type="evidence" value="ECO:0007669"/>
    <property type="project" value="InterPro"/>
</dbReference>
<dbReference type="GO" id="GO:0019082">
    <property type="term" value="P:viral protein processing"/>
    <property type="evidence" value="ECO:0007669"/>
    <property type="project" value="InterPro"/>
</dbReference>
<dbReference type="GO" id="GO:0075523">
    <property type="term" value="P:viral translational frameshifting"/>
    <property type="evidence" value="ECO:0007669"/>
    <property type="project" value="UniProtKB-KW"/>
</dbReference>
<dbReference type="CDD" id="cd21901">
    <property type="entry name" value="alpha_betaCoV_Nsp10"/>
    <property type="match status" value="1"/>
</dbReference>
<dbReference type="CDD" id="cd21558">
    <property type="entry name" value="alphaCoV-Nsp6"/>
    <property type="match status" value="1"/>
</dbReference>
<dbReference type="CDD" id="cd21514">
    <property type="entry name" value="alphaCoV_Nsp2_HCoV-229E-like"/>
    <property type="match status" value="1"/>
</dbReference>
<dbReference type="CDD" id="cd21665">
    <property type="entry name" value="alphaCoV_Nsp5_Mpro"/>
    <property type="match status" value="1"/>
</dbReference>
<dbReference type="CDD" id="cd21826">
    <property type="entry name" value="alphaCoV_Nsp7"/>
    <property type="match status" value="1"/>
</dbReference>
<dbReference type="CDD" id="cd21830">
    <property type="entry name" value="alphaCoV_Nsp8"/>
    <property type="match status" value="1"/>
</dbReference>
<dbReference type="CDD" id="cd21897">
    <property type="entry name" value="alphaCoV_Nsp9"/>
    <property type="match status" value="1"/>
</dbReference>
<dbReference type="CDD" id="cd21731">
    <property type="entry name" value="alphaCoV_PLPro"/>
    <property type="match status" value="1"/>
</dbReference>
<dbReference type="CDD" id="cd21473">
    <property type="entry name" value="cv_Nsp4_TM"/>
    <property type="match status" value="1"/>
</dbReference>
<dbReference type="CDD" id="cd21557">
    <property type="entry name" value="Macro_X_Nsp3-like"/>
    <property type="match status" value="1"/>
</dbReference>
<dbReference type="CDD" id="cd21875">
    <property type="entry name" value="PEDV-like_alphaCoV_Nsp1"/>
    <property type="match status" value="1"/>
</dbReference>
<dbReference type="CDD" id="cd21712">
    <property type="entry name" value="TM_Y_alphaCoV_Nsp3_C"/>
    <property type="match status" value="1"/>
</dbReference>
<dbReference type="Gene3D" id="1.10.8.1190">
    <property type="match status" value="2"/>
</dbReference>
<dbReference type="Gene3D" id="6.10.140.2090">
    <property type="match status" value="1"/>
</dbReference>
<dbReference type="Gene3D" id="1.10.150.420">
    <property type="entry name" value="Coronavirus nonstructural protein 4 C-terminus"/>
    <property type="match status" value="1"/>
</dbReference>
<dbReference type="Gene3D" id="3.40.220.10">
    <property type="entry name" value="Leucine Aminopeptidase, subunit E, domain 1"/>
    <property type="match status" value="1"/>
</dbReference>
<dbReference type="Gene3D" id="1.10.1840.10">
    <property type="entry name" value="main proteinase (3clpro) structure, domain 3"/>
    <property type="match status" value="1"/>
</dbReference>
<dbReference type="Gene3D" id="1.10.8.370">
    <property type="entry name" value="nsp7 replicase"/>
    <property type="match status" value="1"/>
</dbReference>
<dbReference type="Gene3D" id="3.30.70.3540">
    <property type="entry name" value="Nsp8 replicase, head domain"/>
    <property type="match status" value="1"/>
</dbReference>
<dbReference type="Gene3D" id="2.40.10.250">
    <property type="entry name" value="Replicase NSP9"/>
    <property type="match status" value="1"/>
</dbReference>
<dbReference type="Gene3D" id="2.40.10.10">
    <property type="entry name" value="Trypsin-like serine proteases"/>
    <property type="match status" value="2"/>
</dbReference>
<dbReference type="InterPro" id="IPR046443">
    <property type="entry name" value="a/bCoV_NSP1_glob"/>
</dbReference>
<dbReference type="InterPro" id="IPR043613">
    <property type="entry name" value="CoV_NSP2_C"/>
</dbReference>
<dbReference type="InterPro" id="IPR047573">
    <property type="entry name" value="CoV_NSP2_M"/>
</dbReference>
<dbReference type="InterPro" id="IPR049894">
    <property type="entry name" value="COV_NSP3_3ECTO"/>
</dbReference>
<dbReference type="InterPro" id="IPR043611">
    <property type="entry name" value="CoV_NSP3_C"/>
</dbReference>
<dbReference type="InterPro" id="IPR047566">
    <property type="entry name" value="CoV_NSP3_Y"/>
</dbReference>
<dbReference type="InterPro" id="IPR032505">
    <property type="entry name" value="CoV_NSP4_C"/>
</dbReference>
<dbReference type="InterPro" id="IPR043612">
    <property type="entry name" value="CoV_NSP4_N"/>
</dbReference>
<dbReference type="InterPro" id="IPR002589">
    <property type="entry name" value="Macro_dom"/>
</dbReference>
<dbReference type="InterPro" id="IPR043472">
    <property type="entry name" value="Macro_dom-like"/>
</dbReference>
<dbReference type="InterPro" id="IPR044371">
    <property type="entry name" value="Macro_X_NSP3-like"/>
</dbReference>
<dbReference type="InterPro" id="IPR036333">
    <property type="entry name" value="NSP10_sf_CoV"/>
</dbReference>
<dbReference type="InterPro" id="IPR044385">
    <property type="entry name" value="NSP2_HCoV-229E-like"/>
</dbReference>
<dbReference type="InterPro" id="IPR043615">
    <property type="entry name" value="NSP2_N_CoV"/>
</dbReference>
<dbReference type="InterPro" id="IPR044357">
    <property type="entry name" value="NSP3_Ubl1_dom_CoV"/>
</dbReference>
<dbReference type="InterPro" id="IPR044353">
    <property type="entry name" value="Nsp3_Ubl2_dom_CoV"/>
</dbReference>
<dbReference type="InterPro" id="IPR038123">
    <property type="entry name" value="NSP4_C_sf_CoV"/>
</dbReference>
<dbReference type="InterPro" id="IPR044309">
    <property type="entry name" value="NSP5_Mpro_alphaCoV"/>
</dbReference>
<dbReference type="InterPro" id="IPR044369">
    <property type="entry name" value="NSP6_alphaCoV"/>
</dbReference>
<dbReference type="InterPro" id="IPR043610">
    <property type="entry name" value="NSP6_CoV"/>
</dbReference>
<dbReference type="InterPro" id="IPR014828">
    <property type="entry name" value="NSP7_CoV"/>
</dbReference>
<dbReference type="InterPro" id="IPR037204">
    <property type="entry name" value="NSP7_sf_CoV"/>
</dbReference>
<dbReference type="InterPro" id="IPR014829">
    <property type="entry name" value="NSP8_CoV"/>
</dbReference>
<dbReference type="InterPro" id="IPR037230">
    <property type="entry name" value="NSP8_sf_CoV"/>
</dbReference>
<dbReference type="InterPro" id="IPR014822">
    <property type="entry name" value="NSP9_CoV"/>
</dbReference>
<dbReference type="InterPro" id="IPR036499">
    <property type="entry name" value="NSP9_sf_CoV"/>
</dbReference>
<dbReference type="InterPro" id="IPR011050">
    <property type="entry name" value="Pectin_lyase_fold/virulence"/>
</dbReference>
<dbReference type="InterPro" id="IPR013016">
    <property type="entry name" value="Peptidase_C16_CoV"/>
</dbReference>
<dbReference type="InterPro" id="IPR008740">
    <property type="entry name" value="Peptidase_C30_CoV"/>
</dbReference>
<dbReference type="InterPro" id="IPR043477">
    <property type="entry name" value="Peptidase_C30_dom3_CoV"/>
</dbReference>
<dbReference type="InterPro" id="IPR009003">
    <property type="entry name" value="Peptidase_S1_PA"/>
</dbReference>
<dbReference type="InterPro" id="IPR043504">
    <property type="entry name" value="Peptidase_S1_PA_chymotrypsin"/>
</dbReference>
<dbReference type="InterPro" id="IPR043178">
    <property type="entry name" value="PLpro_thumb_sf_CoV"/>
</dbReference>
<dbReference type="InterPro" id="IPR018995">
    <property type="entry name" value="RNA_synth_NSP10_CoV"/>
</dbReference>
<dbReference type="Pfam" id="PF09401">
    <property type="entry name" value="CoV_NSP10"/>
    <property type="match status" value="1"/>
</dbReference>
<dbReference type="Pfam" id="PF19212">
    <property type="entry name" value="CoV_NSP2_C"/>
    <property type="match status" value="2"/>
</dbReference>
<dbReference type="Pfam" id="PF19211">
    <property type="entry name" value="CoV_NSP2_N"/>
    <property type="match status" value="1"/>
</dbReference>
<dbReference type="Pfam" id="PF19218">
    <property type="entry name" value="CoV_NSP3_C"/>
    <property type="match status" value="1"/>
</dbReference>
<dbReference type="Pfam" id="PF16348">
    <property type="entry name" value="CoV_NSP4_C"/>
    <property type="match status" value="1"/>
</dbReference>
<dbReference type="Pfam" id="PF19217">
    <property type="entry name" value="CoV_NSP4_N"/>
    <property type="match status" value="1"/>
</dbReference>
<dbReference type="Pfam" id="PF19213">
    <property type="entry name" value="CoV_NSP6"/>
    <property type="match status" value="1"/>
</dbReference>
<dbReference type="Pfam" id="PF08716">
    <property type="entry name" value="CoV_NSP7"/>
    <property type="match status" value="1"/>
</dbReference>
<dbReference type="Pfam" id="PF08717">
    <property type="entry name" value="CoV_NSP8"/>
    <property type="match status" value="1"/>
</dbReference>
<dbReference type="Pfam" id="PF08710">
    <property type="entry name" value="CoV_NSP9"/>
    <property type="match status" value="1"/>
</dbReference>
<dbReference type="Pfam" id="PF08715">
    <property type="entry name" value="CoV_peptidase"/>
    <property type="match status" value="1"/>
</dbReference>
<dbReference type="Pfam" id="PF01661">
    <property type="entry name" value="Macro"/>
    <property type="match status" value="1"/>
</dbReference>
<dbReference type="Pfam" id="PF05409">
    <property type="entry name" value="Peptidase_C30"/>
    <property type="match status" value="1"/>
</dbReference>
<dbReference type="SMART" id="SM00506">
    <property type="entry name" value="A1pp"/>
    <property type="match status" value="1"/>
</dbReference>
<dbReference type="SUPFAM" id="SSF144246">
    <property type="entry name" value="Coronavirus NSP10-like"/>
    <property type="match status" value="1"/>
</dbReference>
<dbReference type="SUPFAM" id="SSF140367">
    <property type="entry name" value="Coronavirus NSP7-like"/>
    <property type="match status" value="1"/>
</dbReference>
<dbReference type="SUPFAM" id="SSF143076">
    <property type="entry name" value="Coronavirus NSP8-like"/>
    <property type="match status" value="1"/>
</dbReference>
<dbReference type="SUPFAM" id="SSF52949">
    <property type="entry name" value="Macro domain-like"/>
    <property type="match status" value="1"/>
</dbReference>
<dbReference type="SUPFAM" id="SSF51126">
    <property type="entry name" value="Pectin lyase-like"/>
    <property type="match status" value="1"/>
</dbReference>
<dbReference type="SUPFAM" id="SSF101816">
    <property type="entry name" value="Replicase NSP9"/>
    <property type="match status" value="1"/>
</dbReference>
<dbReference type="SUPFAM" id="SSF50494">
    <property type="entry name" value="Trypsin-like serine proteases"/>
    <property type="match status" value="1"/>
</dbReference>
<dbReference type="PROSITE" id="PS51993">
    <property type="entry name" value="COV_3ECTO"/>
    <property type="match status" value="1"/>
</dbReference>
<dbReference type="PROSITE" id="PS51952">
    <property type="entry name" value="COV_EXON_MTASE_COACT"/>
    <property type="match status" value="1"/>
</dbReference>
<dbReference type="PROSITE" id="PS51962">
    <property type="entry name" value="COV_NSP1"/>
    <property type="match status" value="1"/>
</dbReference>
<dbReference type="PROSITE" id="PS51991">
    <property type="entry name" value="COV_NSP2_C"/>
    <property type="match status" value="1"/>
</dbReference>
<dbReference type="PROSITE" id="PS51990">
    <property type="entry name" value="COV_NSP2_M"/>
    <property type="match status" value="1"/>
</dbReference>
<dbReference type="PROSITE" id="PS51989">
    <property type="entry name" value="COV_NSP2_N"/>
    <property type="match status" value="1"/>
</dbReference>
<dbReference type="PROSITE" id="PS51992">
    <property type="entry name" value="COV_NSP3_Y"/>
    <property type="match status" value="1"/>
</dbReference>
<dbReference type="PROSITE" id="PS51943">
    <property type="entry name" value="COV_NSP3A_UBL"/>
    <property type="match status" value="1"/>
</dbReference>
<dbReference type="PROSITE" id="PS51944">
    <property type="entry name" value="COV_NSP3D_UBL"/>
    <property type="match status" value="1"/>
</dbReference>
<dbReference type="PROSITE" id="PS51946">
    <property type="entry name" value="COV_NSP4C"/>
    <property type="match status" value="1"/>
</dbReference>
<dbReference type="PROSITE" id="PS51949">
    <property type="entry name" value="COV_NSP7"/>
    <property type="match status" value="1"/>
</dbReference>
<dbReference type="PROSITE" id="PS51950">
    <property type="entry name" value="COV_NSP8"/>
    <property type="match status" value="1"/>
</dbReference>
<dbReference type="PROSITE" id="PS51951">
    <property type="entry name" value="COV_NSP9_SSRNA_BD"/>
    <property type="match status" value="1"/>
</dbReference>
<dbReference type="PROSITE" id="PS51442">
    <property type="entry name" value="M_PRO"/>
    <property type="match status" value="1"/>
</dbReference>
<dbReference type="PROSITE" id="PS51154">
    <property type="entry name" value="MACRO"/>
    <property type="match status" value="1"/>
</dbReference>
<dbReference type="PROSITE" id="PS51124">
    <property type="entry name" value="PEPTIDASE_C16"/>
    <property type="match status" value="2"/>
</dbReference>
<sequence length="4117" mass="452818">MASNHVTLAFANDAEISAFGFCTASEAVSYYSEAAASGFMQCRFVSLDLADTVEGLLPEDYVMVVIGTTKLSAYVDTFGSRPRNICGWLLFSNCNYFLEELELTFGRRGGNIVPVDQYMCGADGKPVLQESEWEYTDFFADSEDGQLNIAGITYVKAWIVERSDVSYASQNLTSIKSITYCSTYEHTFLDGTAMKVARTPKIKKNVVLSEPLATIYREIGSPFVDNGSDARSIIRRPVFLHAFVKCKCGSYHWTVGDWTSYVSTCCGFKCKPVLVASCSAMPGSVVVTRAGAGTGVKYYNNMFLRHVADIDGLAFWRILKVQSKDDLACSGKFLEHHEEGFTDPCYFLNDSSLATKLKFDILSGKFSDEVKQAIIAGHVVVGSALVDIVDDALGQPWFIRKLGDLASAPWEQLKAVVRGLGLLSDEVVLFGKRLSCATLSIVNGVFEFLADVPEKLAAAVTVFVNFLNEFFESACDCLKVGGKTFNKVGSYVLFDNALVKLVKAKARGPRQAGICEVRYTSLVVGSTTKVVSKRVENANVNLVVVDEDVTLNTTGRTVVVDGLAFFESDGFYRHLADADVVIEHPVYKSACELKPVFECDPIPDFPLPVAASVAELCVQTDLLLKNYNTPYKTYSCVVRGDKCCITCTLQFKAPSYVEDAVNFVDLCTKNIGTAGFHEFYITAHEQQDLQGFLTTCCTMSGFECFMPTIPQCPAVLEEIDGGSIWRSFITGLNTMWDFCKRLKVSFGLDGIVVTVARKFKRLGALLAEMYNTYLSTVVENLVLAGVSFKYYATSVPKIVLGGCFHSVKSVFASVFQIPVQAGIEKFKVFLNCVHPVVPRVIETSFVELEETTFKPPALNGGIAIVDGFAFYYDGTLYYPTDGNSVVPICFKKKGGGDVKFSDEVSVKTIDPVYKVSLEFEFESETIMAVLNKAVGNRIKVTGGWDDVVEYINVAIEVLKDHVEVPKYYIYDEEGGTDPNLPVMVSQWPLNDDTISQDLLDVEVVTDAPIDSEGDEVDSSAPEKVADVANSEPGDDGLPVAPETNVESEVEEVAATLSFIKDTPSTVTKDPFAFDFVSYGGLKVLRQSHNNCWVTSTLVQLQLLGIVDDPAMELFSAGRVGPMVRKCYESQKAILGSLGDVSACLESLTKDLHTLKITCSVVCGCGTGERIYEGCAFRMTPTLEPFPYGACAQCAQVLMHTFKSIVGTGIFCRDTTALSLDSLVVKPLCAAAFIGKDSGHYVTNFYDAAMAIDGYGRHQIKYDTLNTICVKDVNWTAPLVPAVDSVVEPVVKPFYSYKNVDFYQGDFSDLVKLPCDFVVNAANEKLSHGGGIAKAIDVYTKGMLQKCSNDYIKAHGPIKVGRGVMLEALGLKVFNVVGPRKGKHAPELLVKAYKSVFANSGVALTPLISVGIFSVPLEESLSAFLACVGDRHCKCFCYGDKEREAIIKYMDGLVDAIFKEALVDTTPVQEDVQQVSQKPVLPNFEPFRIEGAHAFYECNPEGLMSLGADKLVLFTNSNLDFCSVGKCLNDVTSGALLEAINVFKKSNKTVPAGNCVTLDCANMISITMVVLPFDGDANYDKNYARAVVKVSKLKGKLVLAVDDATLYSKLSHLSVLGFVSTPDDVERFYANKSVVIKVTEDTRSVKAVKVESTATYGQQIGPCLVNDTVVTDNKPVVADVVAKVVPNANWDSHYGFDKAGEFHMLDHTGFTFPSEVVNGRRVIKTTDNNCWVNVTCLQLQFARFRFKSAGLQAMWESYCTGDVAMFVHWLYWLTGVDKGQPSDSENALNMLSKYIVPAGSVTIERVTHDGCCCSKRVVTAPVVNASVLKLGVEDGLCPHGLNYIGKVVVVKGTTIVVNVGKPVVAPSHLFLKGVSYTTFLDNGNGVVGHYTVFDHGTGMVHDGDAFVPGDLNVSPVTNVVVSEQTAVVIKDPVKKAELDATKLLDTMNYASERFFSFGDFMSRNLITVFLYILSILGLCFRAFRKRDVKVLAGVPQRTGIILRKSMRYNAKALGVFFKLKLYWFKVLGKFSLGIYALYALLFMTIRFTPIGSPVCDDVVAGYANSSFDKNEYCNSVICKVCLYGYQELSDFSHTQVVWQHLRDPLIGNVMPFFYLAFLAIFGGVYVKAITLYFIFQYLNSLGVFLGLQQSIWFLQLVPFDVFGDEIVVFFIVTRVLMFIKHVCLGCDKASCVACSKSARLKRVPVQTIFQGTSKSFYVHANGGSKFCKKHNFFCLNCDSYGPGCTFINDVIATEVGNVVKLNVQPTGPATILIDKVEFSNGFYYLYSGDTFWKYNFDITDSKYTCKEALKNCSIITDFIVFNNNGSNVNQVKNACVYFSQMLCKPVKLVDSALLASLSVDFGASLHSAFVSVLSNSFGKDLSSCNDMQDCKSTLGFDDVPLDTFNAAVAEAHRYDVLLTDMSFNNFTTSYAKPEEKFPVHDIATCMRVGAKIVNHNVLVKDSIPVVWLVRDFIALSEETRKYIIRTTKVKGITFMLTFNDCRMHTTIPTVCIANKKGAGLPSFSKVKKFFWFLCLFIVAAFFALSFLDFSTQVSSDSDYDFKYIESGQLKTFDNPLSCVHNVFINFDQWHDAKFGFTPVNNPSCPIVVGVSDEARTVPGIPAGVYLAGKTLVFAINTIFGTSGLCFDASGVADKGACIFNSACTTLSGLGGTAVYCYKNGLVEGAKLYSELAPHSYYKMVDGNAVSLPEIISRGFGIRTIRTKAMTYCRVGQCVQSAEGVCFGADRFFVYNAESGSDFVCGTGLFTLLMNVISVFSKTVPVTVLSGQILFNCIIAFVAVAVCFLFTKFKRMFGDMSVGVFTVGACTLLNNVSYIVTQNTLGMLGYATLYFLCTKGVRYMWIWHLGFLISYILIAPWWVLMVYAFSAIFEFMPNLFKLKVSTQLFEGDKFVGSFENAAAGTFVLDMHAYERLANSISTEKLRQYASTYNKYKYYSGSASEADYRLACFAHLAKAMMDYASNHNDTLYTPPTVSYNSTLQAGLRKMAQPSGVVEKCIVRVCYGNMALNGLWLGDIVMCPRHVIASSTTSTIDYDYALSVLRLHNFSISSGNVFLGVVSATMRGALLQIKVNQNNVHTPKYTYRTVRPGESFNILACYDGAAAGVYGVNMRSNYTIRGSFINGACGSPGYNINNGTVEFCYLHQLELGSGCHVGSDLDGVMYGGYEDQPTLQVEGASSLFTENVLAFLYAALINGSTWWLSSSRIAVDRFNEWAVHNGMTTVGNTDCFSILAAKTGVDVQRLLASIQSLHKNFGGKQILGHTSLTDEFTTGEVVRQMYGVNLQGGYVSRACRNVLLVGSFLTFFWSELVSYTKFFWVNPGYVTPMFACLSLLSSLLMFTLKHKTLFFQVFLIPALIVTSCINLAFDVEVYNYLAEHFDYHVSLMGFNAQGLVNIFVCFVVTILHGTYTWRFFNTPASSVTYVVALLTAAYNYFYASDILSCAMTLFASVTGNWFVGAVCYKVAVYMALRFPTFVAIFGDIKSVMFCYLVLGYFTCCFYGILYWFNRFFKVSVGVYDYTVSAAEFKYMVANGLRAPTGTLDSLLLSAKLIGIGGERNIKISSVQSKLTDIKCSNVVLLGCLSSMNVSANSTEWAYCVDLHNKINLCNDPEKAQEMLLALLAFFLSKNSAFGLDDLLESYFNDNSMLQSVASTYVGLPSYVIYENARQQYEDAVNNGSPPQLVKQLRHAMNVAKSEFDREASTQRKLDRMAEQAAAQMYKEARAVNRKSKVVSAMHSLLFGMLRRLDMSSVDTILNLAKDGVVPLSVIPAVSATKLNIVTSDIDSYNRIQREGCVHYAGTIWNIIDIKDNDGKVVHVKEVTAQNAESLSWPLVLGCERIVKLQNNEIIPGKLKQRSIKAEGDGIVGEGKALYNNEGGRTFMYAFISDKPDLRVVKWEFDGGCNTIELEPPRKFLVDSPNGAQIKYLYFVRNLNTLRRGAVLGYIGATVRLQAGKQTEQAINSSLLTLCAFAVDPAKTYIDAVKSGHKPVGNCVKMLANGSGNGQAVTNGVEASTNQDSYGGASVCLYCRAHVEHPSMDGFCRLKGKYVQVPLGTVDPIRFVLENDVCKVCGCWLSNGCTCDRSIMQSTDMAYLNEYGALVQLD</sequence>
<evidence type="ECO:0000250" key="1"/>
<evidence type="ECO:0000250" key="2">
    <source>
        <dbReference type="UniProtKB" id="P0C6X7"/>
    </source>
</evidence>
<evidence type="ECO:0000250" key="3">
    <source>
        <dbReference type="UniProtKB" id="P0C6X9"/>
    </source>
</evidence>
<evidence type="ECO:0000250" key="4">
    <source>
        <dbReference type="UniProtKB" id="P0C6Y4"/>
    </source>
</evidence>
<evidence type="ECO:0000250" key="5">
    <source>
        <dbReference type="UniProtKB" id="P0DTC1"/>
    </source>
</evidence>
<evidence type="ECO:0000250" key="6">
    <source>
        <dbReference type="UniProtKB" id="P0DTD1"/>
    </source>
</evidence>
<evidence type="ECO:0000255" key="7"/>
<evidence type="ECO:0000255" key="8">
    <source>
        <dbReference type="PROSITE-ProRule" id="PRU00214"/>
    </source>
</evidence>
<evidence type="ECO:0000255" key="9">
    <source>
        <dbReference type="PROSITE-ProRule" id="PRU00444"/>
    </source>
</evidence>
<evidence type="ECO:0000255" key="10">
    <source>
        <dbReference type="PROSITE-ProRule" id="PRU00490"/>
    </source>
</evidence>
<evidence type="ECO:0000255" key="11">
    <source>
        <dbReference type="PROSITE-ProRule" id="PRU00772"/>
    </source>
</evidence>
<evidence type="ECO:0000255" key="12">
    <source>
        <dbReference type="PROSITE-ProRule" id="PRU01291"/>
    </source>
</evidence>
<evidence type="ECO:0000255" key="13">
    <source>
        <dbReference type="PROSITE-ProRule" id="PRU01294"/>
    </source>
</evidence>
<evidence type="ECO:0000255" key="14">
    <source>
        <dbReference type="PROSITE-ProRule" id="PRU01295"/>
    </source>
</evidence>
<evidence type="ECO:0000255" key="15">
    <source>
        <dbReference type="PROSITE-ProRule" id="PRU01296"/>
    </source>
</evidence>
<evidence type="ECO:0000255" key="16">
    <source>
        <dbReference type="PROSITE-ProRule" id="PRU01297"/>
    </source>
</evidence>
<evidence type="ECO:0000255" key="17">
    <source>
        <dbReference type="PROSITE-ProRule" id="PRU01307"/>
    </source>
</evidence>
<evidence type="ECO:0000255" key="18">
    <source>
        <dbReference type="PROSITE-ProRule" id="PRU01333"/>
    </source>
</evidence>
<evidence type="ECO:0000255" key="19">
    <source>
        <dbReference type="PROSITE-ProRule" id="PRU01334"/>
    </source>
</evidence>
<evidence type="ECO:0000255" key="20">
    <source>
        <dbReference type="PROSITE-ProRule" id="PRU01335"/>
    </source>
</evidence>
<evidence type="ECO:0000255" key="21">
    <source>
        <dbReference type="PROSITE-ProRule" id="PRU01336"/>
    </source>
</evidence>
<evidence type="ECO:0000255" key="22">
    <source>
        <dbReference type="PROSITE-ProRule" id="PRU01337"/>
    </source>
</evidence>
<evidence type="ECO:0000256" key="23">
    <source>
        <dbReference type="SAM" id="MobiDB-lite"/>
    </source>
</evidence>
<evidence type="ECO:0000269" key="24">
    <source>
    </source>
</evidence>
<evidence type="ECO:0000269" key="25">
    <source>
    </source>
</evidence>
<evidence type="ECO:0000269" key="26">
    <source>
    </source>
</evidence>
<evidence type="ECO:0000269" key="27">
    <source>
    </source>
</evidence>
<evidence type="ECO:0000269" key="28">
    <source>
    </source>
</evidence>
<evidence type="ECO:0000303" key="29">
    <source>
    </source>
</evidence>
<evidence type="ECO:0000305" key="30"/>
<evidence type="ECO:0007744" key="31">
    <source>
        <dbReference type="PDB" id="5GWZ"/>
    </source>
</evidence>
<evidence type="ECO:0007829" key="32">
    <source>
        <dbReference type="PDB" id="5GWZ"/>
    </source>
</evidence>
<organism>
    <name type="scientific">Porcine epidemic diarrhea virus (strain CV777)</name>
    <name type="common">PEDV</name>
    <dbReference type="NCBI Taxonomy" id="229032"/>
    <lineage>
        <taxon>Viruses</taxon>
        <taxon>Riboviria</taxon>
        <taxon>Orthornavirae</taxon>
        <taxon>Pisuviricota</taxon>
        <taxon>Pisoniviricetes</taxon>
        <taxon>Nidovirales</taxon>
        <taxon>Cornidovirineae</taxon>
        <taxon>Coronaviridae</taxon>
        <taxon>Orthocoronavirinae</taxon>
        <taxon>Alphacoronavirus</taxon>
        <taxon>Pedacovirus</taxon>
        <taxon>Porcine epidemic diarrhea virus</taxon>
    </lineage>
</organism>
<organismHost>
    <name type="scientific">Sus scrofa</name>
    <name type="common">Pig</name>
    <dbReference type="NCBI Taxonomy" id="9823"/>
</organismHost>
<comment type="function">
    <molecule>Non-structural protein 1</molecule>
    <text evidence="24 27">Plays a role in the inhibition of host interferon and pro-inflammatory cytokines production. Suppresses host RELA/p65 activation by blocking NFKBIA phosphorylation (PubMed:28715653). Targets also the RLR pathway downstream of the IRF3 activation by targeting host CREBBP to proteasomal degradation (PubMed:26773386).</text>
</comment>
<comment type="function">
    <molecule>Papain-like protease nsp3</molecule>
    <text evidence="6 28">Responsible for the cleavages located at the N-terminus of the replicase polyprotein. Participates together with nsp4 in the assembly of virally-induced cytoplasmic double-membrane vesicles necessary for viral replication. Forms a molecular pore spanning the double membrane of the coronavirus replication organelle (By similarity). In addition, PLP2 possesses a deubiquitinating/deISGylating activity and processes both 'Lys-48'- and 'Lys-63'-linked polyubiquitin chains from cellular substrates. PLP2 also antagonizes innate immune induction of type I interferon by blocking the nuclear translocation of host IRF-3 (By similarity). Participates in the inhibition of the integrated stress response (ISR) in the infected host cell (PubMed:35859736).</text>
</comment>
<comment type="function">
    <molecule>Non-structural protein 4</molecule>
    <text evidence="2">Participates in the assembly of virally-induced cytoplasmic double-membrane vesicles necessary for viral replication.</text>
</comment>
<comment type="function">
    <molecule>3C-like proteinase nsp5</molecule>
    <text evidence="6 11 28">Responsible for the majority of cleavages as it cleaves the C-terminus of replicase polyprotein at 11 sites (By similarity). Recognizes substrates containing the core sequence [ILMVF]-Q-|-[SGACN] (By similarity). Also contains an ADP-ribose-1''-phosphate (ADRP)-binding function (By similarity). Participates in the inhibition of the integrated stress response (ISR) in the infected cell (PubMed:35859736).</text>
</comment>
<comment type="function">
    <molecule>Non-structural protein 6</molecule>
    <text evidence="2">Plays a role in the initial induction of autophagosomes from host endoplasmic reticulum. Later, limits the expansion of these phagosomes that are no longer able to deliver viral components to lysosomes.</text>
</comment>
<comment type="function">
    <molecule>Non-structural protein 7</molecule>
    <text evidence="6">Plays a role in viral RNA synthesis. Forms a hexadecamer with nsp8 (8 subunits of each) that may participate in viral replication by acting as a primase. Alternatively, may synthesize substantially longer products than oligonucleotide primers.</text>
</comment>
<comment type="function">
    <molecule>Non-structural protein 8</molecule>
    <text evidence="6">Plays a role in viral RNA synthesis. Forms a hexadecamer with nsp7 (8 subunits of each) that may participate in viral replication by acting as a primase. Alternatively, may synthesize substantially longer products than oligonucleotide primers.</text>
</comment>
<comment type="function">
    <molecule>RNA-capping enzyme subunit nsp9</molecule>
    <text evidence="6">Catalytic subunit of viral RNA capping enzyme which catalyzes the RNA guanylyltransferase reaction for genomic and sub-genomic RNAs. The kinase-like NiRAN domain of NSP12 transfers RNA to the amino terminus of NSP9, forming a covalent RNA-protein intermediate. Subsequently, the NiRAN domain transfers RNA to GDP, forming the core cap structure GpppA-RNA. The NSP14 and NSP16 methyltransferases then add methyl groups to form functional cap structures. Interacts with ribosome signal recognition particle RNA (SRP). Together with NSP8, suppresses protein integration into the cell membrane, thereby disrupting host immune defenses.</text>
</comment>
<comment type="function">
    <molecule>Non-structural protein 10</molecule>
    <text evidence="6">Plays a pivotal role in viral transcription by stimulating both nsp14 3'-5' exoribonuclease and nsp16 2'-O-methyltransferase activities. Therefore plays an essential role in viral mRNAs cap methylation.</text>
</comment>
<comment type="catalytic activity">
    <molecule>Papain-like protease nsp3</molecule>
    <reaction>
        <text>Thiol-dependent hydrolysis of ester, thioester, amide, peptide and isopeptide bonds formed by the C-terminal Gly of ubiquitin (a 76-residue protein attached to proteins as an intracellular targeting signal).</text>
        <dbReference type="EC" id="3.4.19.12"/>
    </reaction>
</comment>
<comment type="catalytic activity">
    <molecule>RNA-capping enzyme subunit nsp9</molecule>
    <reaction evidence="5">
        <text>a 5'-end diphospho-ribonucleoside in mRNA + GTP + H(+) = a 5'-end (5'-triphosphoguanosine)-ribonucleoside in mRNA + diphosphate</text>
        <dbReference type="Rhea" id="RHEA:67012"/>
        <dbReference type="Rhea" id="RHEA-COMP:17165"/>
        <dbReference type="Rhea" id="RHEA-COMP:17166"/>
        <dbReference type="ChEBI" id="CHEBI:15378"/>
        <dbReference type="ChEBI" id="CHEBI:33019"/>
        <dbReference type="ChEBI" id="CHEBI:37565"/>
        <dbReference type="ChEBI" id="CHEBI:167616"/>
        <dbReference type="ChEBI" id="CHEBI:167617"/>
        <dbReference type="EC" id="2.7.7.50"/>
    </reaction>
    <physiologicalReaction direction="right-to-left" evidence="5">
        <dbReference type="Rhea" id="RHEA:67014"/>
    </physiologicalReaction>
</comment>
<comment type="activity regulation">
    <molecule>3C-like proteinase nsp5</molecule>
    <text evidence="25">Inhibited by the substrate-analog Cbz-Val-Asn-Ser-Thr-Leu-Gln-CMK. Inhibited by (R)-16 (PubMed:27173881).</text>
</comment>
<comment type="subunit">
    <molecule>Non-structural protein 4</molecule>
    <text evidence="2">Interacts with PL-PRO and nsp6.</text>
</comment>
<comment type="subunit">
    <molecule>3C-like proteinase nsp5</molecule>
    <text evidence="5 25 26">Monomer (By similarity). Homodimer (PubMed:27173881, PubMed:28287727).</text>
</comment>
<comment type="subunit">
    <molecule>Non-structural protein 7</molecule>
    <text evidence="5">Interacts with nsp8 and nsp12 to form the replication-transcription complex (RTC): nsp12, nsp7, two subunits of nsp8, and up to two subunits of nsp13. Eight copies of nsp7 and eight copies of nsp8 assemble to form a heterohexadecamer dsRNA-encircling ring structure.</text>
</comment>
<comment type="subunit">
    <molecule>Non-structural protein 8</molecule>
    <text evidence="5">Interacts with nsp7, nsp13 and nsp12 to form the replication-transcription complex (RTC): nsp12, nsp7, two subunits of nsp8, and up to two subunits of nsp13. Eight copies of nsp7 and eight copies of nsp8 assemble to form a heterohexadecamer dsRNA-encircling ring structure.</text>
</comment>
<comment type="subunit">
    <molecule>RNA-capping enzyme subunit nsp9</molecule>
    <text evidence="4">Homodimer; disulfide-linked.</text>
</comment>
<comment type="subunit">
    <molecule>Non-structural protein 10</molecule>
    <text evidence="2">Dodecamer. Interacts with nsp14 and nsp16; these interactions enhance nsp14 and nsp16 enzymatic activities.</text>
</comment>
<comment type="subcellular location">
    <molecule>Non-structural protein 1</molecule>
    <subcellularLocation>
        <location evidence="24">Host cytoplasm</location>
    </subcellularLocation>
    <subcellularLocation>
        <location evidence="24">Host nucleus</location>
    </subcellularLocation>
</comment>
<comment type="subcellular location">
    <molecule>Papain-like protease nsp3</molecule>
    <subcellularLocation>
        <location evidence="2">Host membrane</location>
        <topology evidence="2">Multi-pass membrane protein</topology>
    </subcellularLocation>
</comment>
<comment type="subcellular location">
    <molecule>Non-structural protein 4</molecule>
    <subcellularLocation>
        <location evidence="2">Host membrane</location>
        <topology evidence="2">Multi-pass membrane protein</topology>
    </subcellularLocation>
</comment>
<comment type="subcellular location">
    <molecule>Non-structural protein 6</molecule>
    <subcellularLocation>
        <location evidence="2">Host membrane</location>
        <topology evidence="2">Multi-pass membrane protein</topology>
    </subcellularLocation>
</comment>
<comment type="subcellular location">
    <molecule>Non-structural protein 7</molecule>
    <subcellularLocation>
        <location evidence="2">Host cytoplasm</location>
        <location evidence="2">Host perinuclear region</location>
    </subcellularLocation>
    <subcellularLocation>
        <location evidence="5">Host cytoplasm</location>
    </subcellularLocation>
    <subcellularLocation>
        <location evidence="5">Host endoplasmic reticulum</location>
    </subcellularLocation>
    <text evidence="1">nsp7, nsp8, nsp9 and nsp10 are localized in cytoplasmic foci, largely perinuclear. Late in infection, they merge into confluent complexes (By similarity).</text>
</comment>
<comment type="subcellular location">
    <molecule>Non-structural protein 8</molecule>
    <subcellularLocation>
        <location evidence="3">Host cytoplasm</location>
        <location evidence="3">Host perinuclear region</location>
    </subcellularLocation>
    <subcellularLocation>
        <location evidence="5">Host cytoplasm</location>
    </subcellularLocation>
    <subcellularLocation>
        <location evidence="5">Host endoplasmic reticulum</location>
    </subcellularLocation>
    <text evidence="1">nsp7, nsp8, nsp9 and nsp10 are localized in cytoplasmic foci, largely perinuclear. Late in infection, they merge into confluent complexes (By similarity).</text>
</comment>
<comment type="subcellular location">
    <molecule>RNA-capping enzyme subunit nsp9</molecule>
    <subcellularLocation>
        <location evidence="3">Host cytoplasm</location>
        <location evidence="3">Host perinuclear region</location>
    </subcellularLocation>
    <subcellularLocation>
        <location evidence="5">Host cytoplasm</location>
    </subcellularLocation>
    <subcellularLocation>
        <location evidence="5">Host endoplasmic reticulum</location>
    </subcellularLocation>
    <text evidence="3">nsp7, nsp8, nsp9 and nsp10 are localized in cytoplasmic foci, largely perinuclear. Late in infection, they merge into confluent complexes.</text>
</comment>
<comment type="subcellular location">
    <molecule>Non-structural protein 10</molecule>
    <subcellularLocation>
        <location evidence="3">Host cytoplasm</location>
        <location evidence="3">Host perinuclear region</location>
    </subcellularLocation>
    <subcellularLocation>
        <location evidence="5">Host cytoplasm</location>
    </subcellularLocation>
    <subcellularLocation>
        <location evidence="5">Host endoplasmic reticulum</location>
    </subcellularLocation>
    <text evidence="3">nsp7, nsp8, nsp9 and nsp10 are localized in cytoplasmic foci, largely perinuclear. Late in infection, they merge into confluent complexes.</text>
</comment>
<comment type="alternative products">
    <event type="ribosomal frameshifting"/>
    <isoform>
        <id>P0C6V6-1</id>
        <name>Replicase polyprotein 1a</name>
        <name>pp1a</name>
        <name>ORF1a polyprotein</name>
        <sequence type="displayed"/>
    </isoform>
    <isoform>
        <id>P0C6Y4-1</id>
        <name>Replicase polyprotein 1ab</name>
        <name>pp1ab</name>
        <sequence type="external"/>
    </isoform>
</comment>
<comment type="domain">
    <molecule>Replicase polyprotein 1a</molecule>
    <text>The hydrophobic domains (HD) could mediate the membrane association of the replication complex and thereby alter the architecture of the host cell membrane.</text>
</comment>
<comment type="domain">
    <molecule>Papain-like protease nsp3</molecule>
    <text evidence="29">Contains two papain-like protease domains (PLP1 and PLP2 or PLpro).</text>
</comment>
<comment type="PTM">
    <molecule>Replicase polyprotein 1a</molecule>
    <text evidence="1">Specific enzymatic cleavages in vivo by its own proteases yield mature proteins. 3CL-PRO and PL-PRO proteinases are autocatalytically processed (By similarity).</text>
</comment>
<comment type="miscellaneous">
    <molecule>Isoform Replicase polyprotein 1a</molecule>
    <text evidence="30">Produced by conventional translation.</text>
</comment>
<comment type="similarity">
    <text evidence="30">Belongs to the coronaviruses polyprotein 1ab family.</text>
</comment>
<accession>P0C6V6</accession>
<accession>Q91AV2</accession>
<keyword id="KW-0002">3D-structure</keyword>
<keyword id="KW-1072">Activation of host autophagy by virus</keyword>
<keyword id="KW-1015">Disulfide bond</keyword>
<keyword id="KW-1035">Host cytoplasm</keyword>
<keyword id="KW-1038">Host endoplasmic reticulum</keyword>
<keyword id="KW-1043">Host membrane</keyword>
<keyword id="KW-1048">Host nucleus</keyword>
<keyword id="KW-0945">Host-virus interaction</keyword>
<keyword id="KW-0378">Hydrolase</keyword>
<keyword id="KW-1090">Inhibition of host innate immune response by virus</keyword>
<keyword id="KW-1092">Inhibition of host IRF3 by virus</keyword>
<keyword id="KW-1100">Inhibition of host NF-kappa-B by virus</keyword>
<keyword id="KW-1113">Inhibition of host RLR pathway by virus</keyword>
<keyword id="KW-0472">Membrane</keyword>
<keyword id="KW-0479">Metal-binding</keyword>
<keyword id="KW-1127">Modulation of host ubiquitin pathway by viral deubiquitinase</keyword>
<keyword id="KW-1130">Modulation of host ubiquitin pathway by virus</keyword>
<keyword id="KW-0645">Protease</keyword>
<keyword id="KW-0677">Repeat</keyword>
<keyword id="KW-0688">Ribosomal frameshifting</keyword>
<keyword id="KW-0694">RNA-binding</keyword>
<keyword id="KW-0788">Thiol protease</keyword>
<keyword id="KW-0808">Transferase</keyword>
<keyword id="KW-0812">Transmembrane</keyword>
<keyword id="KW-1133">Transmembrane helix</keyword>
<keyword id="KW-0833">Ubl conjugation pathway</keyword>
<keyword id="KW-0899">Viral immunoevasion</keyword>
<keyword id="KW-0862">Zinc</keyword>
<keyword id="KW-0863">Zinc-finger</keyword>